<name>VA54_VACCW</name>
<sequence length="90" mass="10800">MTRWWRSRYICRSQCSNVKNSTCSQQILYIHLLILSYTTITKSFFKTLNHHQKSMFKVIRLKYIFEINSCISHPSILDLYVLKNTILLIL</sequence>
<accession>P68621</accession>
<accession>P21072</accession>
<accession>P24767</accession>
<dbReference type="EMBL" id="M58054">
    <property type="status" value="NOT_ANNOTATED_CDS"/>
    <property type="molecule type" value="Genomic_DNA"/>
</dbReference>
<dbReference type="PIR" id="B42523">
    <property type="entry name" value="B42523"/>
</dbReference>
<gene>
    <name type="ORF">A54L</name>
    <name type="ORF">SALFD</name>
</gene>
<proteinExistence type="predicted"/>
<reference key="1">
    <citation type="journal article" date="1991" name="J. Gen. Virol.">
        <title>Nucleotide sequence of 42 kbp of vaccinia virus strain WR from near the right inverted terminal repeat.</title>
        <authorList>
            <person name="Smith G.L."/>
            <person name="Chan Y.S."/>
            <person name="Howard S.T."/>
        </authorList>
    </citation>
    <scope>NUCLEOTIDE SEQUENCE [GENOMIC DNA]</scope>
</reference>
<reference key="2">
    <citation type="journal article" date="1991" name="Virology">
        <title>Vaccinia virus homologues of the Shope fibroma virus inverted terminal repeat proteins and a discontinuous ORF related to the tumor necrosis factor receptor family.</title>
        <authorList>
            <person name="Howard S.T."/>
            <person name="Chan Y.S."/>
            <person name="Smith G.L."/>
        </authorList>
    </citation>
    <scope>NUCLEOTIDE SEQUENCE [GENOMIC DNA] OF 1-81</scope>
</reference>
<organismHost>
    <name type="scientific">Bos taurus</name>
    <name type="common">Bovine</name>
    <dbReference type="NCBI Taxonomy" id="9913"/>
</organismHost>
<protein>
    <recommendedName>
        <fullName>Protein A54</fullName>
    </recommendedName>
</protein>
<organism>
    <name type="scientific">Vaccinia virus (strain Western Reserve)</name>
    <name type="common">VACV</name>
    <name type="synonym">Vaccinia virus (strain WR)</name>
    <dbReference type="NCBI Taxonomy" id="10254"/>
    <lineage>
        <taxon>Viruses</taxon>
        <taxon>Varidnaviria</taxon>
        <taxon>Bamfordvirae</taxon>
        <taxon>Nucleocytoviricota</taxon>
        <taxon>Pokkesviricetes</taxon>
        <taxon>Chitovirales</taxon>
        <taxon>Poxviridae</taxon>
        <taxon>Chordopoxvirinae</taxon>
        <taxon>Orthopoxvirus</taxon>
        <taxon>Vaccinia virus</taxon>
    </lineage>
</organism>
<feature type="chain" id="PRO_0000099352" description="Protein A54">
    <location>
        <begin position="1"/>
        <end position="90"/>
    </location>
</feature>